<accession>Q9DDK4</accession>
<accession>Q6DI49</accession>
<comment type="function">
    <text evidence="6">G-protein coupled receptor for the bioactive lysosphingolipid sphingosine 1-phosphate (S1P) that seems to be coupled to the G(i) subclass of heteromeric G proteins. Signaling leads to the activation of RAC1, SRC, PTK2/FAK1 and MAP kinases. Plays an important role in cell migration, probably via its role in the reorganization of the actin cytoskeleton and the formation of lamellipodia in response to stimuli that increase the activity of the sphingosine kinase SPHK1. Required for normal chemotaxis toward sphingosine 1-phosphate.</text>
</comment>
<comment type="subcellular location">
    <subcellularLocation>
        <location>Cell membrane</location>
        <topology>Multi-pass membrane protein</topology>
    </subcellularLocation>
</comment>
<comment type="developmental stage">
    <text evidence="6">Embryonic brain. Not detected during blastula or gastrula stages. At the 4-5 somite stage, expressed in the diencephalon just posterior to the optic vesicles, and weakly in the hindbrain. By the 14 somite stage, there is widespread expression in the CNS, particularly in the ventral diencephalon, optic stalks and anterior hindbrain.</text>
</comment>
<comment type="similarity">
    <text evidence="4">Belongs to the G-protein coupled receptor 1 family.</text>
</comment>
<sequence>MDDLIARHYNFTGKFRKVHKDPGLKADSVVFIIVCCFIILENVLVLLTIWRTKKFHKPMYYFIGNLALSDLLAGVVYTANILLSGANTYKLTPTQWFFREGSMFVALAASVFSLLAIAIERHLTMLKMKLHNNGKTCRVFMLISTVWFIAAILGGLPVMGWNCIDSMNNCSTVLPLYHKAYILFCTTVFSVILMAIVILYARIYALVRTRSRKLVFRKVANGRGSNKSSEKSMALLKTVIIVLSCFIACWAPLFILLLLDVACQTLTCSILYKAEWFLALAVLNSAMNPLIYTLTSNEMRRAFIKMLNCGVCVQPSGKFSRPIMGAEFSRSKSDNSSHPNKDEPEYSPRETIVSSGNITSSS</sequence>
<protein>
    <recommendedName>
        <fullName>Sphingosine 1-phosphate receptor 1</fullName>
        <shortName>S1P receptor 1</shortName>
        <shortName>S1P1</shortName>
    </recommendedName>
    <alternativeName>
        <fullName>Sphingosine 1-phosphate receptor Edg-1</fullName>
        <shortName>S1P receptor Edg-1</shortName>
    </alternativeName>
</protein>
<dbReference type="EMBL" id="AF321294">
    <property type="protein sequence ID" value="AAG45430.1"/>
    <property type="molecule type" value="mRNA"/>
</dbReference>
<dbReference type="EMBL" id="BC075741">
    <property type="protein sequence ID" value="AAH75741.1"/>
    <property type="molecule type" value="mRNA"/>
</dbReference>
<dbReference type="PIR" id="JC7559">
    <property type="entry name" value="JC7559"/>
</dbReference>
<dbReference type="RefSeq" id="NP_571766.3">
    <property type="nucleotide sequence ID" value="NM_131691.3"/>
</dbReference>
<dbReference type="SMR" id="Q9DDK4"/>
<dbReference type="FunCoup" id="Q9DDK4">
    <property type="interactions" value="509"/>
</dbReference>
<dbReference type="STRING" id="7955.ENSDARP00000062632"/>
<dbReference type="GlyCosmos" id="Q9DDK4">
    <property type="glycosylation" value="2 sites, No reported glycans"/>
</dbReference>
<dbReference type="PaxDb" id="7955-ENSDARP00000062632"/>
<dbReference type="GeneID" id="64617"/>
<dbReference type="KEGG" id="dre:64617"/>
<dbReference type="AGR" id="ZFIN:ZDB-GENE-001228-2"/>
<dbReference type="CTD" id="1901"/>
<dbReference type="ZFIN" id="ZDB-GENE-001228-2">
    <property type="gene designation" value="s1pr1"/>
</dbReference>
<dbReference type="eggNOG" id="ENOG502QSFG">
    <property type="taxonomic scope" value="Eukaryota"/>
</dbReference>
<dbReference type="InParanoid" id="Q9DDK4"/>
<dbReference type="OrthoDB" id="9945063at2759"/>
<dbReference type="PhylomeDB" id="Q9DDK4"/>
<dbReference type="Reactome" id="R-DRE-419408">
    <property type="pathway name" value="Lysosphingolipid and LPA receptors"/>
</dbReference>
<dbReference type="PRO" id="PR:Q9DDK4"/>
<dbReference type="Proteomes" id="UP000000437">
    <property type="component" value="Alternate scaffold 22"/>
</dbReference>
<dbReference type="Proteomes" id="UP000000437">
    <property type="component" value="Chromosome 22"/>
</dbReference>
<dbReference type="GO" id="GO:0005737">
    <property type="term" value="C:cytoplasm"/>
    <property type="evidence" value="ECO:0000318"/>
    <property type="project" value="GO_Central"/>
</dbReference>
<dbReference type="GO" id="GO:0016020">
    <property type="term" value="C:membrane"/>
    <property type="evidence" value="ECO:0000305"/>
    <property type="project" value="UniProtKB"/>
</dbReference>
<dbReference type="GO" id="GO:0005886">
    <property type="term" value="C:plasma membrane"/>
    <property type="evidence" value="ECO:0000250"/>
    <property type="project" value="UniProtKB"/>
</dbReference>
<dbReference type="GO" id="GO:0070915">
    <property type="term" value="F:lysophosphatidic acid receptor activity"/>
    <property type="evidence" value="ECO:0000314"/>
    <property type="project" value="UniProtKB"/>
</dbReference>
<dbReference type="GO" id="GO:0038036">
    <property type="term" value="F:sphingosine-1-phosphate receptor activity"/>
    <property type="evidence" value="ECO:0000250"/>
    <property type="project" value="UniProtKB"/>
</dbReference>
<dbReference type="GO" id="GO:0007189">
    <property type="term" value="P:adenylate cyclase-activating G protein-coupled receptor signaling pathway"/>
    <property type="evidence" value="ECO:0000318"/>
    <property type="project" value="GO_Central"/>
</dbReference>
<dbReference type="GO" id="GO:0001525">
    <property type="term" value="P:angiogenesis"/>
    <property type="evidence" value="ECO:0000318"/>
    <property type="project" value="GO_Central"/>
</dbReference>
<dbReference type="GO" id="GO:0042074">
    <property type="term" value="P:cell migration involved in gastrulation"/>
    <property type="evidence" value="ECO:0000315"/>
    <property type="project" value="ZFIN"/>
</dbReference>
<dbReference type="GO" id="GO:0006935">
    <property type="term" value="P:chemotaxis"/>
    <property type="evidence" value="ECO:0007669"/>
    <property type="project" value="UniProtKB-KW"/>
</dbReference>
<dbReference type="GO" id="GO:0007186">
    <property type="term" value="P:G protein-coupled receptor signaling pathway"/>
    <property type="evidence" value="ECO:0000314"/>
    <property type="project" value="UniProtKB"/>
</dbReference>
<dbReference type="GO" id="GO:0007507">
    <property type="term" value="P:heart development"/>
    <property type="evidence" value="ECO:0000315"/>
    <property type="project" value="ZFIN"/>
</dbReference>
<dbReference type="GO" id="GO:0008078">
    <property type="term" value="P:mesodermal cell migration"/>
    <property type="evidence" value="ECO:0000316"/>
    <property type="project" value="ZFIN"/>
</dbReference>
<dbReference type="GO" id="GO:0016525">
    <property type="term" value="P:negative regulation of angiogenesis"/>
    <property type="evidence" value="ECO:0000315"/>
    <property type="project" value="ZFIN"/>
</dbReference>
<dbReference type="GO" id="GO:0030335">
    <property type="term" value="P:positive regulation of cell migration"/>
    <property type="evidence" value="ECO:0000315"/>
    <property type="project" value="ZFIN"/>
</dbReference>
<dbReference type="GO" id="GO:0060312">
    <property type="term" value="P:regulation of blood vessel remodeling"/>
    <property type="evidence" value="ECO:0000315"/>
    <property type="project" value="ZFIN"/>
</dbReference>
<dbReference type="GO" id="GO:0019222">
    <property type="term" value="P:regulation of metabolic process"/>
    <property type="evidence" value="ECO:0000318"/>
    <property type="project" value="GO_Central"/>
</dbReference>
<dbReference type="GO" id="GO:0003376">
    <property type="term" value="P:sphingosine-1-phosphate receptor signaling pathway"/>
    <property type="evidence" value="ECO:0000250"/>
    <property type="project" value="UniProtKB"/>
</dbReference>
<dbReference type="GO" id="GO:0002040">
    <property type="term" value="P:sprouting angiogenesis"/>
    <property type="evidence" value="ECO:0000315"/>
    <property type="project" value="ZFIN"/>
</dbReference>
<dbReference type="GO" id="GO:0001944">
    <property type="term" value="P:vasculature development"/>
    <property type="evidence" value="ECO:0000315"/>
    <property type="project" value="ZFIN"/>
</dbReference>
<dbReference type="CDD" id="cd15346">
    <property type="entry name" value="7tmA_S1PR1_Edg1"/>
    <property type="match status" value="1"/>
</dbReference>
<dbReference type="FunFam" id="1.20.1070.10:FF:000098">
    <property type="entry name" value="Sphingosine 1-phosphate receptor 1"/>
    <property type="match status" value="1"/>
</dbReference>
<dbReference type="Gene3D" id="1.20.1070.10">
    <property type="entry name" value="Rhodopsin 7-helix transmembrane proteins"/>
    <property type="match status" value="1"/>
</dbReference>
<dbReference type="InterPro" id="IPR000987">
    <property type="entry name" value="EDG1"/>
</dbReference>
<dbReference type="InterPro" id="IPR000276">
    <property type="entry name" value="GPCR_Rhodpsn"/>
</dbReference>
<dbReference type="InterPro" id="IPR017452">
    <property type="entry name" value="GPCR_Rhodpsn_7TM"/>
</dbReference>
<dbReference type="InterPro" id="IPR004061">
    <property type="entry name" value="S1P_rcpt"/>
</dbReference>
<dbReference type="PANTHER" id="PTHR22750">
    <property type="entry name" value="G-PROTEIN COUPLED RECEPTOR"/>
    <property type="match status" value="1"/>
</dbReference>
<dbReference type="Pfam" id="PF00001">
    <property type="entry name" value="7tm_1"/>
    <property type="match status" value="1"/>
</dbReference>
<dbReference type="PRINTS" id="PR00642">
    <property type="entry name" value="EDG1RECEPTOR"/>
</dbReference>
<dbReference type="PRINTS" id="PR00237">
    <property type="entry name" value="GPCRRHODOPSN"/>
</dbReference>
<dbReference type="PRINTS" id="PR01523">
    <property type="entry name" value="S1PRECEPTOR"/>
</dbReference>
<dbReference type="SMART" id="SM01381">
    <property type="entry name" value="7TM_GPCR_Srsx"/>
    <property type="match status" value="1"/>
</dbReference>
<dbReference type="SUPFAM" id="SSF81321">
    <property type="entry name" value="Family A G protein-coupled receptor-like"/>
    <property type="match status" value="1"/>
</dbReference>
<dbReference type="PROSITE" id="PS00237">
    <property type="entry name" value="G_PROTEIN_RECEP_F1_1"/>
    <property type="match status" value="1"/>
</dbReference>
<dbReference type="PROSITE" id="PS50262">
    <property type="entry name" value="G_PROTEIN_RECEP_F1_2"/>
    <property type="match status" value="1"/>
</dbReference>
<feature type="chain" id="PRO_0000069415" description="Sphingosine 1-phosphate receptor 1">
    <location>
        <begin position="1"/>
        <end position="362"/>
    </location>
</feature>
<feature type="topological domain" description="Extracellular" evidence="1">
    <location>
        <begin position="1"/>
        <end position="25"/>
    </location>
</feature>
<feature type="transmembrane region" description="Helical; Name=1" evidence="1">
    <location>
        <begin position="26"/>
        <end position="47"/>
    </location>
</feature>
<feature type="topological domain" description="Cytoplasmic" evidence="1">
    <location>
        <begin position="48"/>
        <end position="61"/>
    </location>
</feature>
<feature type="transmembrane region" description="Helical; Name=2" evidence="1">
    <location>
        <begin position="62"/>
        <end position="83"/>
    </location>
</feature>
<feature type="topological domain" description="Extracellular" evidence="1">
    <location>
        <begin position="84"/>
        <end position="95"/>
    </location>
</feature>
<feature type="transmembrane region" description="Helical; Name=3" evidence="1">
    <location>
        <begin position="96"/>
        <end position="117"/>
    </location>
</feature>
<feature type="topological domain" description="Cytoplasmic" evidence="1">
    <location>
        <begin position="118"/>
        <end position="139"/>
    </location>
</feature>
<feature type="transmembrane region" description="Helical; Name=4" evidence="1">
    <location>
        <begin position="140"/>
        <end position="161"/>
    </location>
</feature>
<feature type="topological domain" description="Extracellular" evidence="1">
    <location>
        <begin position="162"/>
        <end position="175"/>
    </location>
</feature>
<feature type="transmembrane region" description="Helical; Name=5" evidence="1">
    <location>
        <begin position="176"/>
        <end position="203"/>
    </location>
</feature>
<feature type="topological domain" description="Cytoplasmic" evidence="1">
    <location>
        <begin position="204"/>
        <end position="238"/>
    </location>
</feature>
<feature type="transmembrane region" description="Helical; Name=6" evidence="1">
    <location>
        <begin position="239"/>
        <end position="259"/>
    </location>
</feature>
<feature type="topological domain" description="Extracellular" evidence="1">
    <location>
        <begin position="260"/>
        <end position="270"/>
    </location>
</feature>
<feature type="transmembrane region" description="Helical; Name=7" evidence="1">
    <location>
        <begin position="271"/>
        <end position="291"/>
    </location>
</feature>
<feature type="topological domain" description="Cytoplasmic" evidence="1">
    <location>
        <begin position="292"/>
        <end position="362"/>
    </location>
</feature>
<feature type="region of interest" description="Disordered" evidence="5">
    <location>
        <begin position="328"/>
        <end position="362"/>
    </location>
</feature>
<feature type="compositionally biased region" description="Basic and acidic residues" evidence="5">
    <location>
        <begin position="329"/>
        <end position="348"/>
    </location>
</feature>
<feature type="compositionally biased region" description="Polar residues" evidence="5">
    <location>
        <begin position="352"/>
        <end position="362"/>
    </location>
</feature>
<feature type="binding site" evidence="1">
    <location>
        <begin position="99"/>
        <end position="100"/>
    </location>
    <ligand>
        <name>sphing-4-enine 1-phosphate</name>
        <dbReference type="ChEBI" id="CHEBI:60119"/>
    </ligand>
</feature>
<feature type="binding site" evidence="1">
    <location>
        <begin position="246"/>
        <end position="250"/>
    </location>
    <ligand>
        <name>sphing-4-enine 1-phosphate</name>
        <dbReference type="ChEBI" id="CHEBI:60119"/>
    </ligand>
</feature>
<feature type="lipid moiety-binding region" description="S-palmitoyl cysteine" evidence="2">
    <location>
        <position position="309"/>
    </location>
</feature>
<feature type="glycosylation site" description="N-linked (GlcNAc...) asparagine" evidence="3">
    <location>
        <position position="10"/>
    </location>
</feature>
<feature type="glycosylation site" description="N-linked (GlcNAc...) asparagine" evidence="3">
    <location>
        <position position="169"/>
    </location>
</feature>
<feature type="disulfide bond" evidence="4">
    <location>
        <begin position="163"/>
        <end position="170"/>
    </location>
</feature>
<feature type="disulfide bond" evidence="4">
    <location>
        <begin position="263"/>
        <end position="268"/>
    </location>
</feature>
<feature type="sequence conflict" description="In Ref. 1; AAG45430." evidence="7" ref="1">
    <original>M</original>
    <variation>I</variation>
    <location>
        <position position="167"/>
    </location>
</feature>
<keyword id="KW-1003">Cell membrane</keyword>
<keyword id="KW-0145">Chemotaxis</keyword>
<keyword id="KW-1015">Disulfide bond</keyword>
<keyword id="KW-0297">G-protein coupled receptor</keyword>
<keyword id="KW-0325">Glycoprotein</keyword>
<keyword id="KW-0449">Lipoprotein</keyword>
<keyword id="KW-0472">Membrane</keyword>
<keyword id="KW-0564">Palmitate</keyword>
<keyword id="KW-0597">Phosphoprotein</keyword>
<keyword id="KW-0675">Receptor</keyword>
<keyword id="KW-1185">Reference proteome</keyword>
<keyword id="KW-0807">Transducer</keyword>
<keyword id="KW-0812">Transmembrane</keyword>
<keyword id="KW-1133">Transmembrane helix</keyword>
<reference evidence="7 8" key="1">
    <citation type="journal article" date="2000" name="Biochem. Biophys. Res. Commun.">
        <title>Characterization of a zebrafish (Danio rerio) sphingosine 1-phosphate receptor expressed in the embryonic brain.</title>
        <authorList>
            <person name="Im D.-S."/>
            <person name="Ungar A.R."/>
            <person name="Lynch K.R."/>
        </authorList>
    </citation>
    <scope>NUCLEOTIDE SEQUENCE [MRNA]</scope>
    <scope>FUNCTION</scope>
    <scope>DEVELOPMENTAL STAGE</scope>
</reference>
<reference evidence="7 9" key="2">
    <citation type="submission" date="2004-07" db="EMBL/GenBank/DDBJ databases">
        <authorList>
            <consortium name="NIH - Zebrafish Gene Collection (ZGC) project"/>
        </authorList>
    </citation>
    <scope>NUCLEOTIDE SEQUENCE [LARGE SCALE MRNA]</scope>
    <source>
        <tissue evidence="9">Embryo</tissue>
    </source>
</reference>
<gene>
    <name type="primary">s1pr1</name>
    <name type="synonym">edg1</name>
</gene>
<proteinExistence type="evidence at transcript level"/>
<evidence type="ECO:0000250" key="1"/>
<evidence type="ECO:0000250" key="2">
    <source>
        <dbReference type="UniProtKB" id="P18871"/>
    </source>
</evidence>
<evidence type="ECO:0000255" key="3"/>
<evidence type="ECO:0000255" key="4">
    <source>
        <dbReference type="PROSITE-ProRule" id="PRU00521"/>
    </source>
</evidence>
<evidence type="ECO:0000256" key="5">
    <source>
        <dbReference type="SAM" id="MobiDB-lite"/>
    </source>
</evidence>
<evidence type="ECO:0000269" key="6">
    <source>
    </source>
</evidence>
<evidence type="ECO:0000305" key="7"/>
<evidence type="ECO:0000312" key="8">
    <source>
        <dbReference type="EMBL" id="AAG45430.1"/>
    </source>
</evidence>
<evidence type="ECO:0000312" key="9">
    <source>
        <dbReference type="EMBL" id="AAH75741.1"/>
    </source>
</evidence>
<organism>
    <name type="scientific">Danio rerio</name>
    <name type="common">Zebrafish</name>
    <name type="synonym">Brachydanio rerio</name>
    <dbReference type="NCBI Taxonomy" id="7955"/>
    <lineage>
        <taxon>Eukaryota</taxon>
        <taxon>Metazoa</taxon>
        <taxon>Chordata</taxon>
        <taxon>Craniata</taxon>
        <taxon>Vertebrata</taxon>
        <taxon>Euteleostomi</taxon>
        <taxon>Actinopterygii</taxon>
        <taxon>Neopterygii</taxon>
        <taxon>Teleostei</taxon>
        <taxon>Ostariophysi</taxon>
        <taxon>Cypriniformes</taxon>
        <taxon>Danionidae</taxon>
        <taxon>Danioninae</taxon>
        <taxon>Danio</taxon>
    </lineage>
</organism>
<name>S1PR1_DANRE</name>